<accession>Q9Z5T9</accession>
<accession>Q5NPX4</accession>
<keyword id="KW-0975">Bacterial flagellum</keyword>
<keyword id="KW-0574">Periplasm</keyword>
<keyword id="KW-1185">Reference proteome</keyword>
<keyword id="KW-0732">Signal</keyword>
<feature type="signal peptide" evidence="2">
    <location>
        <begin position="1"/>
        <end position="44"/>
    </location>
</feature>
<feature type="chain" id="PRO_0000009534" description="Flagellar P-ring protein">
    <location>
        <begin position="45"/>
        <end position="388"/>
    </location>
</feature>
<feature type="sequence conflict" description="In Ref. 1; AAD19722." evidence="3" ref="1">
    <original>DSS</original>
    <variation>TPV</variation>
    <location>
        <begin position="75"/>
        <end position="77"/>
    </location>
</feature>
<feature type="sequence conflict" description="In Ref. 1; AAD19722." evidence="3" ref="1">
    <original>A</original>
    <variation>G</variation>
    <location>
        <position position="109"/>
    </location>
</feature>
<feature type="sequence conflict" description="In Ref. 1; AAD19722." evidence="3" ref="1">
    <original>PS</original>
    <variation>LR</variation>
    <location>
        <begin position="190"/>
        <end position="191"/>
    </location>
</feature>
<name>FLGI_ZYMMO</name>
<reference key="1">
    <citation type="submission" date="1999-01" db="EMBL/GenBank/DDBJ databases">
        <authorList>
            <person name="Um H.W."/>
            <person name="Kang H.S."/>
        </authorList>
    </citation>
    <scope>NUCLEOTIDE SEQUENCE [GENOMIC DNA]</scope>
    <source>
        <strain>ATCC 31821 / ZM4 / CP4</strain>
    </source>
</reference>
<reference key="2">
    <citation type="journal article" date="2005" name="Nat. Biotechnol.">
        <title>The genome sequence of the ethanologenic bacterium Zymomonas mobilis ZM4.</title>
        <authorList>
            <person name="Seo J.-S."/>
            <person name="Chong H."/>
            <person name="Park H.S."/>
            <person name="Yoon K.-O."/>
            <person name="Jung C."/>
            <person name="Kim J.J."/>
            <person name="Hong J.H."/>
            <person name="Kim H."/>
            <person name="Kim J.-H."/>
            <person name="Kil J.-I."/>
            <person name="Park C.J."/>
            <person name="Oh H.-M."/>
            <person name="Lee J.-S."/>
            <person name="Jin S.-J."/>
            <person name="Um H.-W."/>
            <person name="Lee H.-J."/>
            <person name="Oh S.-J."/>
            <person name="Kim J.Y."/>
            <person name="Kang H.L."/>
            <person name="Lee S.Y."/>
            <person name="Lee K.J."/>
            <person name="Kang H.S."/>
        </authorList>
    </citation>
    <scope>NUCLEOTIDE SEQUENCE [LARGE SCALE GENOMIC DNA]</scope>
    <source>
        <strain>ATCC 31821 / ZM4 / CP4</strain>
    </source>
</reference>
<proteinExistence type="inferred from homology"/>
<sequence length="388" mass="40201">MGRKSMDIFSSERSLIGRLFQKSILGLFLAFLALVSPFMGAAKADRIKDLGYFQGMRTNQLTGYGIVTGLAGTGDSSLQYTIAAMTALSARFGLSMPSNVSPTLQDAAAVIITADLPPFAKPGQTIDITVSALGRARSIRGGALMITPLYGADGQIYAMAQGNLEVGGLGISGRDGSNLTVNIPTAGRIPSGATVERAVDPGFASAPYLQFNLSEADLTNVQRVATAINNALGPGRAHVLDGVSVAITAPEGAEIRTALMGEIENLPVDRADARARVTINARTGTIVINGAVRISPAAITHGRLTVRVDENYGVSQPNAFGQGQTAVTPNSTITAEQTRSPMFHLQNGANLTDIVKAVNAIGATPGDLAAILEGLKQAGAMNADLIIL</sequence>
<comment type="function">
    <text evidence="1">Assembles around the rod to form the L-ring and probably protects the motor/basal body from shearing forces during rotation.</text>
</comment>
<comment type="subunit">
    <text evidence="1">The basal body constitutes a major portion of the flagellar organelle and consists of four rings (L,P,S, and M) mounted on a central rod.</text>
</comment>
<comment type="subcellular location">
    <subcellularLocation>
        <location evidence="1">Periplasm</location>
    </subcellularLocation>
    <subcellularLocation>
        <location evidence="1">Bacterial flagellum basal body</location>
    </subcellularLocation>
</comment>
<comment type="similarity">
    <text evidence="3">Belongs to the FlgI family.</text>
</comment>
<comment type="sequence caution" evidence="3">
    <conflict type="erroneous initiation">
        <sequence resource="EMBL-CDS" id="AAD19722"/>
    </conflict>
</comment>
<organism>
    <name type="scientific">Zymomonas mobilis subsp. mobilis (strain ATCC 31821 / ZM4 / CP4)</name>
    <dbReference type="NCBI Taxonomy" id="264203"/>
    <lineage>
        <taxon>Bacteria</taxon>
        <taxon>Pseudomonadati</taxon>
        <taxon>Pseudomonadota</taxon>
        <taxon>Alphaproteobacteria</taxon>
        <taxon>Sphingomonadales</taxon>
        <taxon>Zymomonadaceae</taxon>
        <taxon>Zymomonas</taxon>
    </lineage>
</organism>
<gene>
    <name type="primary">flgI</name>
    <name type="ordered locus">ZMO0607</name>
</gene>
<protein>
    <recommendedName>
        <fullName>Flagellar P-ring protein</fullName>
    </recommendedName>
    <alternativeName>
        <fullName>Basal body P-ring protein</fullName>
    </alternativeName>
</protein>
<dbReference type="EMBL" id="AF124349">
    <property type="protein sequence ID" value="AAD19722.1"/>
    <property type="status" value="ALT_INIT"/>
    <property type="molecule type" value="Genomic_DNA"/>
</dbReference>
<dbReference type="EMBL" id="AE008692">
    <property type="protein sequence ID" value="AAV89231.2"/>
    <property type="molecule type" value="Genomic_DNA"/>
</dbReference>
<dbReference type="SMR" id="Q9Z5T9"/>
<dbReference type="STRING" id="264203.ZMO0607"/>
<dbReference type="KEGG" id="zmo:ZMO0607"/>
<dbReference type="eggNOG" id="COG1706">
    <property type="taxonomic scope" value="Bacteria"/>
</dbReference>
<dbReference type="HOGENOM" id="CLU_045235_1_0_5"/>
<dbReference type="Proteomes" id="UP000001173">
    <property type="component" value="Chromosome"/>
</dbReference>
<dbReference type="GO" id="GO:0009428">
    <property type="term" value="C:bacterial-type flagellum basal body, distal rod, P ring"/>
    <property type="evidence" value="ECO:0007669"/>
    <property type="project" value="InterPro"/>
</dbReference>
<dbReference type="GO" id="GO:0030288">
    <property type="term" value="C:outer membrane-bounded periplasmic space"/>
    <property type="evidence" value="ECO:0007669"/>
    <property type="project" value="InterPro"/>
</dbReference>
<dbReference type="GO" id="GO:0005198">
    <property type="term" value="F:structural molecule activity"/>
    <property type="evidence" value="ECO:0007669"/>
    <property type="project" value="InterPro"/>
</dbReference>
<dbReference type="GO" id="GO:0071973">
    <property type="term" value="P:bacterial-type flagellum-dependent cell motility"/>
    <property type="evidence" value="ECO:0007669"/>
    <property type="project" value="InterPro"/>
</dbReference>
<dbReference type="HAMAP" id="MF_00416">
    <property type="entry name" value="FlgI"/>
    <property type="match status" value="1"/>
</dbReference>
<dbReference type="InterPro" id="IPR001782">
    <property type="entry name" value="Flag_FlgI"/>
</dbReference>
<dbReference type="NCBIfam" id="NF003676">
    <property type="entry name" value="PRK05303.1"/>
    <property type="match status" value="1"/>
</dbReference>
<dbReference type="PANTHER" id="PTHR30381">
    <property type="entry name" value="FLAGELLAR P-RING PERIPLASMIC PROTEIN FLGI"/>
    <property type="match status" value="1"/>
</dbReference>
<dbReference type="PANTHER" id="PTHR30381:SF0">
    <property type="entry name" value="FLAGELLAR P-RING PROTEIN"/>
    <property type="match status" value="1"/>
</dbReference>
<dbReference type="Pfam" id="PF02119">
    <property type="entry name" value="FlgI"/>
    <property type="match status" value="1"/>
</dbReference>
<dbReference type="PRINTS" id="PR01010">
    <property type="entry name" value="FLGPRINGFLGI"/>
</dbReference>
<evidence type="ECO:0000250" key="1"/>
<evidence type="ECO:0000255" key="2"/>
<evidence type="ECO:0000305" key="3"/>